<dbReference type="EMBL" id="AF088926">
    <property type="protein sequence ID" value="AAD38436.1"/>
    <property type="molecule type" value="Genomic_DNA"/>
</dbReference>
<dbReference type="SMR" id="Q9XP82"/>
<dbReference type="GO" id="GO:0005743">
    <property type="term" value="C:mitochondrial inner membrane"/>
    <property type="evidence" value="ECO:0007669"/>
    <property type="project" value="UniProtKB-SubCell"/>
</dbReference>
<dbReference type="GO" id="GO:0045275">
    <property type="term" value="C:respiratory chain complex III"/>
    <property type="evidence" value="ECO:0007669"/>
    <property type="project" value="InterPro"/>
</dbReference>
<dbReference type="GO" id="GO:0046872">
    <property type="term" value="F:metal ion binding"/>
    <property type="evidence" value="ECO:0007669"/>
    <property type="project" value="UniProtKB-KW"/>
</dbReference>
<dbReference type="GO" id="GO:0008121">
    <property type="term" value="F:ubiquinol-cytochrome-c reductase activity"/>
    <property type="evidence" value="ECO:0007669"/>
    <property type="project" value="InterPro"/>
</dbReference>
<dbReference type="GO" id="GO:0006122">
    <property type="term" value="P:mitochondrial electron transport, ubiquinol to cytochrome c"/>
    <property type="evidence" value="ECO:0007669"/>
    <property type="project" value="TreeGrafter"/>
</dbReference>
<dbReference type="CDD" id="cd00290">
    <property type="entry name" value="cytochrome_b_C"/>
    <property type="match status" value="1"/>
</dbReference>
<dbReference type="CDD" id="cd00284">
    <property type="entry name" value="Cytochrome_b_N"/>
    <property type="match status" value="1"/>
</dbReference>
<dbReference type="FunFam" id="1.20.810.10:FF:000002">
    <property type="entry name" value="Cytochrome b"/>
    <property type="match status" value="1"/>
</dbReference>
<dbReference type="Gene3D" id="1.20.810.10">
    <property type="entry name" value="Cytochrome Bc1 Complex, Chain C"/>
    <property type="match status" value="1"/>
</dbReference>
<dbReference type="InterPro" id="IPR005798">
    <property type="entry name" value="Cyt_b/b6_C"/>
</dbReference>
<dbReference type="InterPro" id="IPR036150">
    <property type="entry name" value="Cyt_b/b6_C_sf"/>
</dbReference>
<dbReference type="InterPro" id="IPR005797">
    <property type="entry name" value="Cyt_b/b6_N"/>
</dbReference>
<dbReference type="InterPro" id="IPR027387">
    <property type="entry name" value="Cytb/b6-like_sf"/>
</dbReference>
<dbReference type="InterPro" id="IPR030689">
    <property type="entry name" value="Cytochrome_b"/>
</dbReference>
<dbReference type="InterPro" id="IPR048260">
    <property type="entry name" value="Cytochrome_b_C_euk/bac"/>
</dbReference>
<dbReference type="InterPro" id="IPR048259">
    <property type="entry name" value="Cytochrome_b_N_euk/bac"/>
</dbReference>
<dbReference type="InterPro" id="IPR016174">
    <property type="entry name" value="Di-haem_cyt_TM"/>
</dbReference>
<dbReference type="PANTHER" id="PTHR19271">
    <property type="entry name" value="CYTOCHROME B"/>
    <property type="match status" value="1"/>
</dbReference>
<dbReference type="PANTHER" id="PTHR19271:SF16">
    <property type="entry name" value="CYTOCHROME B"/>
    <property type="match status" value="1"/>
</dbReference>
<dbReference type="Pfam" id="PF00032">
    <property type="entry name" value="Cytochrom_B_C"/>
    <property type="match status" value="1"/>
</dbReference>
<dbReference type="Pfam" id="PF00033">
    <property type="entry name" value="Cytochrome_B"/>
    <property type="match status" value="1"/>
</dbReference>
<dbReference type="PIRSF" id="PIRSF038885">
    <property type="entry name" value="COB"/>
    <property type="match status" value="1"/>
</dbReference>
<dbReference type="SUPFAM" id="SSF81648">
    <property type="entry name" value="a domain/subunit of cytochrome bc1 complex (Ubiquinol-cytochrome c reductase)"/>
    <property type="match status" value="1"/>
</dbReference>
<dbReference type="SUPFAM" id="SSF81342">
    <property type="entry name" value="Transmembrane di-heme cytochromes"/>
    <property type="match status" value="1"/>
</dbReference>
<dbReference type="PROSITE" id="PS51003">
    <property type="entry name" value="CYTB_CTER"/>
    <property type="match status" value="1"/>
</dbReference>
<dbReference type="PROSITE" id="PS51002">
    <property type="entry name" value="CYTB_NTER"/>
    <property type="match status" value="1"/>
</dbReference>
<keyword id="KW-0249">Electron transport</keyword>
<keyword id="KW-0349">Heme</keyword>
<keyword id="KW-0408">Iron</keyword>
<keyword id="KW-0472">Membrane</keyword>
<keyword id="KW-0479">Metal-binding</keyword>
<keyword id="KW-0496">Mitochondrion</keyword>
<keyword id="KW-0999">Mitochondrion inner membrane</keyword>
<keyword id="KW-0679">Respiratory chain</keyword>
<keyword id="KW-0812">Transmembrane</keyword>
<keyword id="KW-1133">Transmembrane helix</keyword>
<keyword id="KW-0813">Transport</keyword>
<keyword id="KW-0830">Ubiquinone</keyword>
<protein>
    <recommendedName>
        <fullName>Cytochrome b</fullName>
    </recommendedName>
    <alternativeName>
        <fullName>Complex III subunit 3</fullName>
    </alternativeName>
    <alternativeName>
        <fullName>Complex III subunit III</fullName>
    </alternativeName>
    <alternativeName>
        <fullName>Cytochrome b-c1 complex subunit 3</fullName>
    </alternativeName>
    <alternativeName>
        <fullName>Ubiquinol-cytochrome-c reductase complex cytochrome b subunit</fullName>
    </alternativeName>
</protein>
<evidence type="ECO:0000250" key="1"/>
<evidence type="ECO:0000250" key="2">
    <source>
        <dbReference type="UniProtKB" id="P00157"/>
    </source>
</evidence>
<evidence type="ECO:0000255" key="3">
    <source>
        <dbReference type="PROSITE-ProRule" id="PRU00967"/>
    </source>
</evidence>
<evidence type="ECO:0000255" key="4">
    <source>
        <dbReference type="PROSITE-ProRule" id="PRU00968"/>
    </source>
</evidence>
<feature type="chain" id="PRO_0000254861" description="Cytochrome b">
    <location>
        <begin position="1"/>
        <end position="381"/>
    </location>
</feature>
<feature type="transmembrane region" description="Helical" evidence="2">
    <location>
        <begin position="33"/>
        <end position="53"/>
    </location>
</feature>
<feature type="transmembrane region" description="Helical" evidence="2">
    <location>
        <begin position="77"/>
        <end position="98"/>
    </location>
</feature>
<feature type="transmembrane region" description="Helical" evidence="2">
    <location>
        <begin position="113"/>
        <end position="133"/>
    </location>
</feature>
<feature type="transmembrane region" description="Helical" evidence="2">
    <location>
        <begin position="178"/>
        <end position="198"/>
    </location>
</feature>
<feature type="transmembrane region" description="Helical" evidence="2">
    <location>
        <begin position="226"/>
        <end position="246"/>
    </location>
</feature>
<feature type="transmembrane region" description="Helical" evidence="2">
    <location>
        <begin position="288"/>
        <end position="308"/>
    </location>
</feature>
<feature type="transmembrane region" description="Helical" evidence="2">
    <location>
        <begin position="320"/>
        <end position="340"/>
    </location>
</feature>
<feature type="transmembrane region" description="Helical" evidence="2">
    <location>
        <begin position="347"/>
        <end position="367"/>
    </location>
</feature>
<feature type="binding site" description="axial binding residue" evidence="2">
    <location>
        <position position="83"/>
    </location>
    <ligand>
        <name>heme b</name>
        <dbReference type="ChEBI" id="CHEBI:60344"/>
        <label>b562</label>
    </ligand>
    <ligandPart>
        <name>Fe</name>
        <dbReference type="ChEBI" id="CHEBI:18248"/>
    </ligandPart>
</feature>
<feature type="binding site" description="axial binding residue" evidence="2">
    <location>
        <position position="97"/>
    </location>
    <ligand>
        <name>heme b</name>
        <dbReference type="ChEBI" id="CHEBI:60344"/>
        <label>b566</label>
    </ligand>
    <ligandPart>
        <name>Fe</name>
        <dbReference type="ChEBI" id="CHEBI:18248"/>
    </ligandPart>
</feature>
<feature type="binding site" description="axial binding residue" evidence="2">
    <location>
        <position position="182"/>
    </location>
    <ligand>
        <name>heme b</name>
        <dbReference type="ChEBI" id="CHEBI:60344"/>
        <label>b562</label>
    </ligand>
    <ligandPart>
        <name>Fe</name>
        <dbReference type="ChEBI" id="CHEBI:18248"/>
    </ligandPart>
</feature>
<feature type="binding site" description="axial binding residue" evidence="2">
    <location>
        <position position="196"/>
    </location>
    <ligand>
        <name>heme b</name>
        <dbReference type="ChEBI" id="CHEBI:60344"/>
        <label>b566</label>
    </ligand>
    <ligandPart>
        <name>Fe</name>
        <dbReference type="ChEBI" id="CHEBI:18248"/>
    </ligandPart>
</feature>
<feature type="binding site" evidence="2">
    <location>
        <position position="201"/>
    </location>
    <ligand>
        <name>a ubiquinone</name>
        <dbReference type="ChEBI" id="CHEBI:16389"/>
    </ligand>
</feature>
<comment type="function">
    <text evidence="2">Component of the ubiquinol-cytochrome c reductase complex (complex III or cytochrome b-c1 complex) that is part of the mitochondrial respiratory chain. The b-c1 complex mediates electron transfer from ubiquinol to cytochrome c. Contributes to the generation of a proton gradient across the mitochondrial membrane that is then used for ATP synthesis.</text>
</comment>
<comment type="cofactor">
    <cofactor evidence="2">
        <name>heme b</name>
        <dbReference type="ChEBI" id="CHEBI:60344"/>
    </cofactor>
    <text evidence="2">Binds 2 heme b groups non-covalently.</text>
</comment>
<comment type="subunit">
    <text evidence="2">The cytochrome bc1 complex contains 11 subunits: 3 respiratory subunits (MT-CYB, CYC1 and UQCRFS1), 2 core proteins (UQCRC1 and UQCRC2) and 6 low-molecular weight proteins (UQCRH/QCR6, UQCRB/QCR7, UQCRQ/QCR8, UQCR10/QCR9, UQCR11/QCR10 and a cleavage product of UQCRFS1). This cytochrome bc1 complex then forms a dimer.</text>
</comment>
<comment type="subcellular location">
    <subcellularLocation>
        <location evidence="2">Mitochondrion inner membrane</location>
        <topology evidence="2">Multi-pass membrane protein</topology>
    </subcellularLocation>
</comment>
<comment type="miscellaneous">
    <text evidence="1">Heme 1 (or BL or b562) is low-potential and absorbs at about 562 nm, and heme 2 (or BH or b566) is high-potential and absorbs at about 566 nm.</text>
</comment>
<comment type="similarity">
    <text evidence="3 4">Belongs to the cytochrome b family.</text>
</comment>
<comment type="caution">
    <text evidence="2">The full-length protein contains only eight transmembrane helices, not nine as predicted by bioinformatics tools.</text>
</comment>
<reference key="1">
    <citation type="journal article" date="1999" name="Mol. Phylogenet. Evol.">
        <title>Systematic relationships within the dasyurid marsupial tribe Sminthopsini -- a multigene approach.</title>
        <authorList>
            <person name="Blacket M.J."/>
            <person name="Krajewski C."/>
            <person name="Labrinidis A."/>
            <person name="Cambron B."/>
            <person name="Cooper S."/>
            <person name="Westerman M."/>
        </authorList>
    </citation>
    <scope>NUCLEOTIDE SEQUENCE [GENOMIC DNA]</scope>
</reference>
<proteinExistence type="inferred from homology"/>
<accession>Q9XP82</accession>
<name>CYB_SMIGR</name>
<sequence length="381" mass="42845">MTNLRKTHPLMKIINHSFIDLPAPSNISAWWNFGSLLGICLVIQILTGLFLAMHYTSDTLTAFSSVAHICRDVNYGWLIRNLHANGASMFFMCLFLHVGRGIYYGSYLYKETWNIGVILLLTVMATAFVGYVLPWGQMSFWGATVITNLLSAIPYIGTTLAEWIWGGFAVDKATLTRFFAFHFILPFIITALVVVHLLFLHETGSNNPSGINPDSDKIPFHPYYTIKDALGLMLLLLVLLSLALFSPDLLGDPDNFSPANPLNTPPHIKPEWYFLFAYAILRSIPNKLGGVLALLASILILLIIPFLHTANQRSMMFRPISQTLFWILTANLITLTWIGGQPVEQPFIIIGQLASILYFMLILVLMPLAGMFENYMLEPKW</sequence>
<gene>
    <name type="primary">MT-CYB</name>
    <name type="synonym">COB</name>
    <name type="synonym">CYTB</name>
    <name type="synonym">MTCYB</name>
</gene>
<organism>
    <name type="scientific">Sminthopsis griseoventer</name>
    <name type="common">Gray-bellied dunnart</name>
    <dbReference type="NCBI Taxonomy" id="75756"/>
    <lineage>
        <taxon>Eukaryota</taxon>
        <taxon>Metazoa</taxon>
        <taxon>Chordata</taxon>
        <taxon>Craniata</taxon>
        <taxon>Vertebrata</taxon>
        <taxon>Euteleostomi</taxon>
        <taxon>Mammalia</taxon>
        <taxon>Metatheria</taxon>
        <taxon>Dasyuromorphia</taxon>
        <taxon>Dasyuridae</taxon>
        <taxon>Sminthopsis</taxon>
    </lineage>
</organism>
<geneLocation type="mitochondrion"/>